<comment type="catalytic activity">
    <reaction evidence="1">
        <text>tRNA(Cys) + L-cysteine + ATP = L-cysteinyl-tRNA(Cys) + AMP + diphosphate</text>
        <dbReference type="Rhea" id="RHEA:17773"/>
        <dbReference type="Rhea" id="RHEA-COMP:9661"/>
        <dbReference type="Rhea" id="RHEA-COMP:9679"/>
        <dbReference type="ChEBI" id="CHEBI:30616"/>
        <dbReference type="ChEBI" id="CHEBI:33019"/>
        <dbReference type="ChEBI" id="CHEBI:35235"/>
        <dbReference type="ChEBI" id="CHEBI:78442"/>
        <dbReference type="ChEBI" id="CHEBI:78517"/>
        <dbReference type="ChEBI" id="CHEBI:456215"/>
        <dbReference type="EC" id="6.1.1.16"/>
    </reaction>
</comment>
<comment type="cofactor">
    <cofactor evidence="1">
        <name>Zn(2+)</name>
        <dbReference type="ChEBI" id="CHEBI:29105"/>
    </cofactor>
    <text evidence="1">Binds 1 zinc ion per subunit.</text>
</comment>
<comment type="subunit">
    <text evidence="1">Monomer.</text>
</comment>
<comment type="subcellular location">
    <subcellularLocation>
        <location evidence="1">Cytoplasm</location>
    </subcellularLocation>
</comment>
<comment type="similarity">
    <text evidence="1">Belongs to the class-I aminoacyl-tRNA synthetase family.</text>
</comment>
<keyword id="KW-0030">Aminoacyl-tRNA synthetase</keyword>
<keyword id="KW-0067">ATP-binding</keyword>
<keyword id="KW-0963">Cytoplasm</keyword>
<keyword id="KW-0436">Ligase</keyword>
<keyword id="KW-0479">Metal-binding</keyword>
<keyword id="KW-0547">Nucleotide-binding</keyword>
<keyword id="KW-0648">Protein biosynthesis</keyword>
<keyword id="KW-0862">Zinc</keyword>
<organism>
    <name type="scientific">Xanthomonas euvesicatoria pv. vesicatoria (strain 85-10)</name>
    <name type="common">Xanthomonas campestris pv. vesicatoria</name>
    <dbReference type="NCBI Taxonomy" id="316273"/>
    <lineage>
        <taxon>Bacteria</taxon>
        <taxon>Pseudomonadati</taxon>
        <taxon>Pseudomonadota</taxon>
        <taxon>Gammaproteobacteria</taxon>
        <taxon>Lysobacterales</taxon>
        <taxon>Lysobacteraceae</taxon>
        <taxon>Xanthomonas</taxon>
    </lineage>
</organism>
<sequence>MPMSLRLHNNLTRRVEPFAPLDPSSPTLYVCGPTVYNYAHIGNARGPVVFDVLAALLRRRYGALRYARNITDVDDKINAAAQAQGVPISTITDRFAAIYRQDMAALGVVPPDIEPEATAHIPQIVAMIEQLIATGHAYAAEGHVLFSVSSFEDYGKLSRRDPDEMLAGARVDVAPYKRDPGDFVLWKPSSDDLPGWPSPWGRGRPGWHIECSAMAAAHLGPTIDIHAGGVDLQFPHHENEIAQSECAHGGATFARFWLHNGMLNFSGAKMSKSLGNIETVHELIARHPPEALRYALLSAHYRQPLDWSDGLIEQAKNTLDRLYGTLRDLAALEAESGSDLAVSMTIPAEVESALDDDLNTPLALSVMASIASDARALRSDLMQSGQASARMIELHAARAKLLGAGMALGLLQQDPAAWFSRGTDAGDDARITALVEERSAAKKAKDFARADAIRKQLAEEGIVLEDTPQGVRWKRA</sequence>
<proteinExistence type="inferred from homology"/>
<accession>Q3BSH9</accession>
<name>SYC_XANE5</name>
<evidence type="ECO:0000255" key="1">
    <source>
        <dbReference type="HAMAP-Rule" id="MF_00041"/>
    </source>
</evidence>
<dbReference type="EC" id="6.1.1.16" evidence="1"/>
<dbReference type="EMBL" id="AM039952">
    <property type="protein sequence ID" value="CAJ24230.1"/>
    <property type="molecule type" value="Genomic_DNA"/>
</dbReference>
<dbReference type="SMR" id="Q3BSH9"/>
<dbReference type="STRING" id="456327.BJD11_10135"/>
<dbReference type="KEGG" id="xcv:XCV2553"/>
<dbReference type="eggNOG" id="COG0215">
    <property type="taxonomic scope" value="Bacteria"/>
</dbReference>
<dbReference type="HOGENOM" id="CLU_013528_0_1_6"/>
<dbReference type="Proteomes" id="UP000007069">
    <property type="component" value="Chromosome"/>
</dbReference>
<dbReference type="GO" id="GO:0005829">
    <property type="term" value="C:cytosol"/>
    <property type="evidence" value="ECO:0007669"/>
    <property type="project" value="TreeGrafter"/>
</dbReference>
<dbReference type="GO" id="GO:0005524">
    <property type="term" value="F:ATP binding"/>
    <property type="evidence" value="ECO:0007669"/>
    <property type="project" value="UniProtKB-UniRule"/>
</dbReference>
<dbReference type="GO" id="GO:0004817">
    <property type="term" value="F:cysteine-tRNA ligase activity"/>
    <property type="evidence" value="ECO:0007669"/>
    <property type="project" value="UniProtKB-UniRule"/>
</dbReference>
<dbReference type="GO" id="GO:0008270">
    <property type="term" value="F:zinc ion binding"/>
    <property type="evidence" value="ECO:0007669"/>
    <property type="project" value="UniProtKB-UniRule"/>
</dbReference>
<dbReference type="GO" id="GO:0006423">
    <property type="term" value="P:cysteinyl-tRNA aminoacylation"/>
    <property type="evidence" value="ECO:0007669"/>
    <property type="project" value="UniProtKB-UniRule"/>
</dbReference>
<dbReference type="CDD" id="cd00672">
    <property type="entry name" value="CysRS_core"/>
    <property type="match status" value="1"/>
</dbReference>
<dbReference type="FunFam" id="3.40.50.620:FF:000068">
    <property type="entry name" value="Cysteine--tRNA ligase"/>
    <property type="match status" value="1"/>
</dbReference>
<dbReference type="Gene3D" id="1.20.120.1910">
    <property type="entry name" value="Cysteine-tRNA ligase, C-terminal anti-codon recognition domain"/>
    <property type="match status" value="1"/>
</dbReference>
<dbReference type="Gene3D" id="3.40.50.620">
    <property type="entry name" value="HUPs"/>
    <property type="match status" value="1"/>
</dbReference>
<dbReference type="HAMAP" id="MF_00041">
    <property type="entry name" value="Cys_tRNA_synth"/>
    <property type="match status" value="1"/>
</dbReference>
<dbReference type="InterPro" id="IPR015803">
    <property type="entry name" value="Cys-tRNA-ligase"/>
</dbReference>
<dbReference type="InterPro" id="IPR015273">
    <property type="entry name" value="Cys-tRNA-synt_Ia_DALR"/>
</dbReference>
<dbReference type="InterPro" id="IPR024909">
    <property type="entry name" value="Cys-tRNA/MSH_ligase"/>
</dbReference>
<dbReference type="InterPro" id="IPR056411">
    <property type="entry name" value="CysS_C"/>
</dbReference>
<dbReference type="InterPro" id="IPR014729">
    <property type="entry name" value="Rossmann-like_a/b/a_fold"/>
</dbReference>
<dbReference type="InterPro" id="IPR032678">
    <property type="entry name" value="tRNA-synt_1_cat_dom"/>
</dbReference>
<dbReference type="InterPro" id="IPR009080">
    <property type="entry name" value="tRNAsynth_Ia_anticodon-bd"/>
</dbReference>
<dbReference type="NCBIfam" id="TIGR00435">
    <property type="entry name" value="cysS"/>
    <property type="match status" value="1"/>
</dbReference>
<dbReference type="PANTHER" id="PTHR10890:SF3">
    <property type="entry name" value="CYSTEINE--TRNA LIGASE, CYTOPLASMIC"/>
    <property type="match status" value="1"/>
</dbReference>
<dbReference type="PANTHER" id="PTHR10890">
    <property type="entry name" value="CYSTEINYL-TRNA SYNTHETASE"/>
    <property type="match status" value="1"/>
</dbReference>
<dbReference type="Pfam" id="PF23493">
    <property type="entry name" value="CysS_C"/>
    <property type="match status" value="1"/>
</dbReference>
<dbReference type="Pfam" id="PF09190">
    <property type="entry name" value="DALR_2"/>
    <property type="match status" value="1"/>
</dbReference>
<dbReference type="Pfam" id="PF01406">
    <property type="entry name" value="tRNA-synt_1e"/>
    <property type="match status" value="1"/>
</dbReference>
<dbReference type="PRINTS" id="PR00983">
    <property type="entry name" value="TRNASYNTHCYS"/>
</dbReference>
<dbReference type="SMART" id="SM00840">
    <property type="entry name" value="DALR_2"/>
    <property type="match status" value="1"/>
</dbReference>
<dbReference type="SUPFAM" id="SSF47323">
    <property type="entry name" value="Anticodon-binding domain of a subclass of class I aminoacyl-tRNA synthetases"/>
    <property type="match status" value="1"/>
</dbReference>
<dbReference type="SUPFAM" id="SSF52374">
    <property type="entry name" value="Nucleotidylyl transferase"/>
    <property type="match status" value="1"/>
</dbReference>
<gene>
    <name evidence="1" type="primary">cysS</name>
    <name type="ordered locus">XCV2553</name>
</gene>
<feature type="chain" id="PRO_0000240975" description="Cysteine--tRNA ligase">
    <location>
        <begin position="1"/>
        <end position="476"/>
    </location>
</feature>
<feature type="short sequence motif" description="'HIGH' region">
    <location>
        <begin position="33"/>
        <end position="43"/>
    </location>
</feature>
<feature type="short sequence motif" description="'KMSKS' region">
    <location>
        <begin position="269"/>
        <end position="273"/>
    </location>
</feature>
<feature type="binding site" evidence="1">
    <location>
        <position position="31"/>
    </location>
    <ligand>
        <name>Zn(2+)</name>
        <dbReference type="ChEBI" id="CHEBI:29105"/>
    </ligand>
</feature>
<feature type="binding site" evidence="1">
    <location>
        <position position="211"/>
    </location>
    <ligand>
        <name>Zn(2+)</name>
        <dbReference type="ChEBI" id="CHEBI:29105"/>
    </ligand>
</feature>
<feature type="binding site" evidence="1">
    <location>
        <position position="236"/>
    </location>
    <ligand>
        <name>Zn(2+)</name>
        <dbReference type="ChEBI" id="CHEBI:29105"/>
    </ligand>
</feature>
<feature type="binding site" evidence="1">
    <location>
        <position position="240"/>
    </location>
    <ligand>
        <name>Zn(2+)</name>
        <dbReference type="ChEBI" id="CHEBI:29105"/>
    </ligand>
</feature>
<feature type="binding site" evidence="1">
    <location>
        <position position="272"/>
    </location>
    <ligand>
        <name>ATP</name>
        <dbReference type="ChEBI" id="CHEBI:30616"/>
    </ligand>
</feature>
<protein>
    <recommendedName>
        <fullName evidence="1">Cysteine--tRNA ligase</fullName>
        <ecNumber evidence="1">6.1.1.16</ecNumber>
    </recommendedName>
    <alternativeName>
        <fullName evidence="1">Cysteinyl-tRNA synthetase</fullName>
        <shortName evidence="1">CysRS</shortName>
    </alternativeName>
</protein>
<reference key="1">
    <citation type="journal article" date="2005" name="J. Bacteriol.">
        <title>Insights into genome plasticity and pathogenicity of the plant pathogenic Bacterium Xanthomonas campestris pv. vesicatoria revealed by the complete genome sequence.</title>
        <authorList>
            <person name="Thieme F."/>
            <person name="Koebnik R."/>
            <person name="Bekel T."/>
            <person name="Berger C."/>
            <person name="Boch J."/>
            <person name="Buettner D."/>
            <person name="Caldana C."/>
            <person name="Gaigalat L."/>
            <person name="Goesmann A."/>
            <person name="Kay S."/>
            <person name="Kirchner O."/>
            <person name="Lanz C."/>
            <person name="Linke B."/>
            <person name="McHardy A.C."/>
            <person name="Meyer F."/>
            <person name="Mittenhuber G."/>
            <person name="Nies D.H."/>
            <person name="Niesbach-Kloesgen U."/>
            <person name="Patschkowski T."/>
            <person name="Rueckert C."/>
            <person name="Rupp O."/>
            <person name="Schneiker S."/>
            <person name="Schuster S.C."/>
            <person name="Vorhoelter F.J."/>
            <person name="Weber E."/>
            <person name="Puehler A."/>
            <person name="Bonas U."/>
            <person name="Bartels D."/>
            <person name="Kaiser O."/>
        </authorList>
    </citation>
    <scope>NUCLEOTIDE SEQUENCE [LARGE SCALE GENOMIC DNA]</scope>
    <source>
        <strain>85-10</strain>
    </source>
</reference>